<accession>O82833</accession>
<name>GELLY_BACSP</name>
<sequence>MRFSWKKLVSAALVMALLVGIVYPAASGRGAVASAASGTTVELVPTDDAFTSAVAKDANANGTWMQLKGSIGGQRYIYMKFDLTALAGVEADRIENAKVWLKKMGTNGTAMTVGLRAVDDTSWSESTLTWNNAPVYGSQVLSQQSVLSTPDVYYPFDLDEYLKTQLAAGKSKLAIAFVPISTLNENMEFYARESTANTPKLVVELKDEPPAPTGLMQLVQSFGGHNKGHLRVVEFDATPASTTGNGTVGITADGAAPAAAADFPIALRFGTDGTIKAANAAGFESKTPVNYTAGQKYHVKAMINLSLGTYDLWLTPPNAGQPVLLAADYAFAASAPALNDIGGVHATADAQSTDVPAVANARLIADHFVSKAPFKDEQGQSLAIRLESDNSLANRSYAIKFDMNLTGNPLETDALISYADRSVTLNGFPDLAYIVRSNFGNFDVRNDNVYASSHPSTAQSNRTYQVEVRINPASGTGQPTRTYDVWIAPEGEQPVQLADQFKARNYANTGYALNNIGQAFVYSQADGLLSIDNHVVQDGQRLDEALARVNAASGEAAMTAALESNALGLPMERYRLMDAAKRAQVAQDVLAGRPAEGYAHALSVQAVFVSAVANRLDTENPTAPANVQVAISNTMQAHVSWTASSDDTGILYYKVFRDGALVGTVTNATSFVDNGLAPATEYTYVVKAYDLVLKEAVSQPATATSPGEQAQVRIPFSAEAIATAFGQPLLDYNLETHSGTLKWVMEWREEYEKSANALKLLTLLSASAPDYIGPDGVTTASAKALQHLRSVTAGGNEPGFAGNGLSGQGYMPLLSAIVMAKKKAPAIWNALTAAEKEKLDLMILAGLYGAKFAYDDENDNKTGIDATGNFDKEWNPNHRSGIAGAIMAMYYFEDAQWLNDQMRSFNYDDWLARLTAAGLTNVRTIYQNSGKTLTEREIRKDAAGDGFVYKGHPLSQPGKIMAEFVNYTFSHPVSPVGGFDSGIGKYRGYIVDGQDDLPNLGADSMGFEFDTLDANGKRSSLVYVFMGWKPNVDAITPVLLLDNIDSGLTSAETRDVVSRLSIGTTDMLYKNEHGYMTYAKGVNEGVKSLNGPILTINEEIWNRILNNPAAPMEAVNQASSAGQMRTALEASALGMILYGYGALSETGKNAVAQHVLDARPAAGYANKAAAQNELYEGVRLQALLALSQAQTAEQMRSALESRALGLYKPKYETASQDKKQFVAQYLLDNKPADGFLTKTEVREQVESALEPQGNQLRNLPPLASGEKRINLADYDHWPQQHGDAEVALWADDKTGAFSLTIDDNFENEHDTWRSLAQQYGFKFSWFVITSLIKDPNKWRTLAAEGHEIGSHTVTHEDKGSTLDPAHLHSEYADSQALLNTIEGVRATTLAYPFGSGREDIAAEYYIAARGTVGLPNPADSINYMNTQSLSVRPGSLELTNQAANGNSVEAMVKTLVDPNHKVWSASYYRGWSNMLVHSLNESGKTPSDGVTRTSRDLTQYLLTLLDTYRDQIWVGRYGDIVRYSQQRDTAHIVVTRKDDRKITFNLTDRMDDTLFDYPLTVKVRVDDAWSDIGATQAGEPIPFVETIRDGKRYLLVKAVPDKGSVSIVPDAASPLNVVNGAVTSEQMLSAIAAPGLGLDLGEFNALGAGKKRMVGSRLLEVRPADGYADAAALQDALDAAVEEANNAPSLSENASLSDLKVNGVTIAGFAPETYAYDIMLPEGTTALPVVSFKVADTGKATAVLQNAPALPGTAKVTVTAEDNWTVATYTLRFQVRISALQRVNTAPDASAMRTAIENAALGLVLAAYNGLTSEQKNSVAASVLTHRPATGYADVQAVQAELNAALPKINAPLLAHAIVDQLNPDTVSTANWTNLYGGTSGRKGGVYMKFNIASLAGLEADAIGDAKVQFFTTREGTVIGYAAPSSWEAPLTWNTQPLADLKNSNMAALAEIGRTAVQATGANYEMNITQYVKDAAAADKTELSLVLLGSNNTNITMQKIPTAFALSVTLATYGEPNPEPSPLAAVNEAGDAAAMQGAIAAVELDLNLTAYNGLTAAQRIDVAQALLDNRPAAGYAHALAVQVALDAAVAAAQPANQAPGGTLAASAEQLQPGQQLELTVGVSDASRFTGADILVHYDPQALTFATELYEGVRMLKAEAIASLQANYQVAAAMAEQPGTIKILLFTAGAGQPLSGTLPLFKLRASVKDDAQTGVSTAVSLSDFELTFEGEDSVWPDTTRAAVSLQIAAHPVEADKTALIAKIAHAQALLTGATVGANPGQYPQAAYDALADAIGLAEEKRDLTGVSQAAVDEAVASLGTAEQQFLNAVIPGVPADLTALNAAIAKAQRLHDNGPYGEKIGQYPQSAKVPLKSALDAAKAVGGSGASSQESVNAAAASLNGAIQTFERSLVTLVGGGATKVGIRDLSIVAKYYGVTSSDPNWGKVSAAAIDGGNEITIEVLAAVARMILADWAAGQ</sequence>
<feature type="signal peptide" evidence="3 5">
    <location>
        <begin position="1"/>
        <end position="35"/>
    </location>
</feature>
<feature type="chain" id="PRO_0000424089" description="Gellan lyase">
    <location>
        <begin position="36"/>
        <end position="2475"/>
    </location>
</feature>
<feature type="chain" id="PRO_0000424090" description="N-terminal gellan lyase">
    <location>
        <begin position="36"/>
        <end position="1205"/>
    </location>
</feature>
<feature type="chain" id="PRO_0000424091" description="C-terminal gellan lyase">
    <location>
        <begin position="1206"/>
        <end position="2475"/>
    </location>
</feature>
<feature type="domain" description="Fibronectin type-III" evidence="1">
    <location>
        <begin position="623"/>
        <end position="708"/>
    </location>
</feature>
<feature type="domain" description="NodB homology" evidence="2">
    <location>
        <begin position="1295"/>
        <end position="1518"/>
    </location>
</feature>
<feature type="domain" description="Cohesin">
    <location>
        <begin position="2111"/>
        <end position="2223"/>
    </location>
</feature>
<feature type="site" description="Cleavage">
    <location>
        <begin position="1205"/>
        <end position="1206"/>
    </location>
</feature>
<keyword id="KW-0903">Direct protein sequencing</keyword>
<keyword id="KW-0456">Lyase</keyword>
<keyword id="KW-0964">Secreted</keyword>
<keyword id="KW-0732">Signal</keyword>
<reference key="1">
    <citation type="journal article" date="1998" name="Arch. Biochem. Biophys.">
        <title>Polysaccharide lyase: molecular cloning of gellan lyase gene and formation of the lyase from a huge precursor protein in Bacillus sp. GL1.</title>
        <authorList>
            <person name="Hashimoto W."/>
            <person name="Sato N."/>
            <person name="Kimura S."/>
            <person name="Murata K."/>
        </authorList>
    </citation>
    <scope>NUCLEOTIDE SEQUENCE [GENOMIC DNA]</scope>
    <scope>PROTEIN SEQUENCE OF 36-45</scope>
    <scope>FUNCTION</scope>
    <scope>CATALYTIC ACTIVITY</scope>
    <source>
        <strain>GL1</strain>
    </source>
</reference>
<reference key="2">
    <citation type="journal article" date="2004" name="Arch. Biochem. Biophys.">
        <title>Posttranslational processing of polysaccharide lyase: maturation route for gellan lyase in Bacillus sp. GL1.</title>
        <authorList>
            <person name="Miyake O."/>
            <person name="Kobayashi E."/>
            <person name="Nankai H."/>
            <person name="Hashimoto W."/>
            <person name="Mikami B."/>
            <person name="Murata K."/>
        </authorList>
    </citation>
    <scope>PROTEIN SEQUENCE OF 36-41; 1169-1194 AND 1203-1205</scope>
    <scope>FUNCTION</scope>
    <scope>CATALYTIC ACTIVITY</scope>
    <scope>BIOPHYSICOCHEMICAL PROPERTIES</scope>
    <scope>PROTEOLYTIC PROCESSING</scope>
    <source>
        <strain>GL1</strain>
    </source>
</reference>
<reference key="3">
    <citation type="journal article" date="1997" name="Arch. Biochem. Biophys.">
        <title>Microbial system for polysaccharide depolymerization: enzymatic route for gellan depolymerization by Bacillus sp. GL1.</title>
        <authorList>
            <person name="Hashimoto W."/>
            <person name="Maesaka K."/>
            <person name="Sato N."/>
            <person name="Kimura S."/>
            <person name="Yamamoto K."/>
            <person name="Kumagai H."/>
            <person name="Murata K."/>
        </authorList>
    </citation>
    <scope>CATALYTIC ACTIVITY</scope>
    <source>
        <strain>GL1</strain>
    </source>
</reference>
<evidence type="ECO:0000255" key="1">
    <source>
        <dbReference type="PROSITE-ProRule" id="PRU00316"/>
    </source>
</evidence>
<evidence type="ECO:0000255" key="2">
    <source>
        <dbReference type="PROSITE-ProRule" id="PRU01014"/>
    </source>
</evidence>
<evidence type="ECO:0000269" key="3">
    <source>
    </source>
</evidence>
<evidence type="ECO:0000269" key="4">
    <source>
    </source>
</evidence>
<evidence type="ECO:0000269" key="5">
    <source>
    </source>
</evidence>
<organism>
    <name type="scientific">Bacillus sp</name>
    <dbReference type="NCBI Taxonomy" id="1409"/>
    <lineage>
        <taxon>Bacteria</taxon>
        <taxon>Bacillati</taxon>
        <taxon>Bacillota</taxon>
        <taxon>Bacilli</taxon>
        <taxon>Bacillales</taxon>
        <taxon>Bacillaceae</taxon>
        <taxon>Bacillus</taxon>
    </lineage>
</organism>
<dbReference type="EC" id="4.2.2.25"/>
<dbReference type="EMBL" id="AB006853">
    <property type="protein sequence ID" value="BAA29068.1"/>
    <property type="molecule type" value="Genomic_DNA"/>
</dbReference>
<dbReference type="PIR" id="T00047">
    <property type="entry name" value="T00047"/>
</dbReference>
<dbReference type="SMR" id="O82833"/>
<dbReference type="KEGG" id="ag:BAA29068"/>
<dbReference type="BioCyc" id="MetaCyc:MONOMER-16405"/>
<dbReference type="BRENDA" id="4.2.2.25">
    <property type="organism ID" value="691"/>
</dbReference>
<dbReference type="GO" id="GO:0005576">
    <property type="term" value="C:extracellular region"/>
    <property type="evidence" value="ECO:0007669"/>
    <property type="project" value="UniProtKB-SubCell"/>
</dbReference>
<dbReference type="GO" id="GO:0052762">
    <property type="term" value="F:gellan lyase activity"/>
    <property type="evidence" value="ECO:0007669"/>
    <property type="project" value="UniProtKB-EC"/>
</dbReference>
<dbReference type="GO" id="GO:0016810">
    <property type="term" value="F:hydrolase activity, acting on carbon-nitrogen (but not peptide) bonds"/>
    <property type="evidence" value="ECO:0007669"/>
    <property type="project" value="InterPro"/>
</dbReference>
<dbReference type="GO" id="GO:0005975">
    <property type="term" value="P:carbohydrate metabolic process"/>
    <property type="evidence" value="ECO:0007669"/>
    <property type="project" value="InterPro"/>
</dbReference>
<dbReference type="CDD" id="cd10967">
    <property type="entry name" value="CE4_GLA_like_6s"/>
    <property type="match status" value="1"/>
</dbReference>
<dbReference type="CDD" id="cd00063">
    <property type="entry name" value="FN3"/>
    <property type="match status" value="1"/>
</dbReference>
<dbReference type="CDD" id="cd08547">
    <property type="entry name" value="Type_II_cohesin"/>
    <property type="match status" value="1"/>
</dbReference>
<dbReference type="Gene3D" id="2.60.40.680">
    <property type="match status" value="1"/>
</dbReference>
<dbReference type="Gene3D" id="1.20.1270.90">
    <property type="entry name" value="AF1782-like"/>
    <property type="match status" value="2"/>
</dbReference>
<dbReference type="Gene3D" id="3.20.20.370">
    <property type="entry name" value="Glycoside hydrolase/deacetylase"/>
    <property type="match status" value="1"/>
</dbReference>
<dbReference type="Gene3D" id="2.60.40.10">
    <property type="entry name" value="Immunoglobulins"/>
    <property type="match status" value="1"/>
</dbReference>
<dbReference type="InterPro" id="IPR055372">
    <property type="entry name" value="CBM96"/>
</dbReference>
<dbReference type="InterPro" id="IPR003961">
    <property type="entry name" value="FN3_dom"/>
</dbReference>
<dbReference type="InterPro" id="IPR036116">
    <property type="entry name" value="FN3_sf"/>
</dbReference>
<dbReference type="InterPro" id="IPR011330">
    <property type="entry name" value="Glyco_hydro/deAcase_b/a-brl"/>
</dbReference>
<dbReference type="InterPro" id="IPR013783">
    <property type="entry name" value="Ig-like_fold"/>
</dbReference>
<dbReference type="InterPro" id="IPR002509">
    <property type="entry name" value="NODB_dom"/>
</dbReference>
<dbReference type="InterPro" id="IPR051398">
    <property type="entry name" value="Polysacch_Deacetylase"/>
</dbReference>
<dbReference type="NCBIfam" id="NF033679">
    <property type="entry name" value="DNRLRE_dom"/>
    <property type="match status" value="1"/>
</dbReference>
<dbReference type="PANTHER" id="PTHR34216">
    <property type="match status" value="1"/>
</dbReference>
<dbReference type="PANTHER" id="PTHR34216:SF3">
    <property type="entry name" value="POLY-BETA-1,6-N-ACETYL-D-GLUCOSAMINE N-DEACETYLASE"/>
    <property type="match status" value="1"/>
</dbReference>
<dbReference type="Pfam" id="PF24517">
    <property type="entry name" value="CBM96"/>
    <property type="match status" value="2"/>
</dbReference>
<dbReference type="Pfam" id="PF01522">
    <property type="entry name" value="Polysacc_deac_1"/>
    <property type="match status" value="1"/>
</dbReference>
<dbReference type="SMART" id="SM00060">
    <property type="entry name" value="FN3"/>
    <property type="match status" value="1"/>
</dbReference>
<dbReference type="SUPFAM" id="SSF49265">
    <property type="entry name" value="Fibronectin type III"/>
    <property type="match status" value="1"/>
</dbReference>
<dbReference type="SUPFAM" id="SSF88713">
    <property type="entry name" value="Glycoside hydrolase/deacetylase"/>
    <property type="match status" value="1"/>
</dbReference>
<dbReference type="PROSITE" id="PS50853">
    <property type="entry name" value="FN3"/>
    <property type="match status" value="1"/>
</dbReference>
<dbReference type="PROSITE" id="PS51677">
    <property type="entry name" value="NODB"/>
    <property type="match status" value="1"/>
</dbReference>
<protein>
    <recommendedName>
        <fullName>Gellan lyase</fullName>
        <ecNumber>4.2.2.25</ecNumber>
    </recommendedName>
    <component>
        <recommendedName>
            <fullName>N-terminal gellan lyase</fullName>
        </recommendedName>
    </component>
    <component>
        <recommendedName>
            <fullName>C-terminal gellan lyase</fullName>
        </recommendedName>
    </component>
</protein>
<proteinExistence type="evidence at protein level"/>
<comment type="function">
    <text evidence="3 5">Cleaves the glycosidic bonds of gellan backbone and releases tetrasaccharide units of glucuronyl-glucosyl-rhamnosyl-glucose with unsaturated glucuronic acid at the non-reducing terminal. The enzyme is highly specific to the heteropolysaccharide gellan, especially deacetylated gellan.</text>
</comment>
<comment type="catalytic activity">
    <reaction evidence="3 4 5">
        <text>Eliminative cleavage of beta-D-glucopyranosyl-(1-&gt;4)-beta-D-glucopyranosyluronate bonds of gellan backbone releasing tetrasaccharides containing a 4-deoxy-4,5-unsaturated D-glucopyranosyluronic acid at the non-reducing end. The tetrasaccharide produced from deacetylated gellan is beta-D-4-deoxy-Delta(4)-GlcAp-(1-&gt;4)-beta-D-Glcp-(1-&gt;4)-alpha-L-Rhap-(1-&gt;3)-beta-D-Glcp.</text>
        <dbReference type="EC" id="4.2.2.25"/>
    </reaction>
</comment>
<comment type="biophysicochemical properties">
    <phDependence>
        <text evidence="3">Optimum pH is 6.0 in potassium phosphate and 7.5 in HEPES buffer.</text>
    </phDependence>
</comment>
<comment type="subcellular location">
    <subcellularLocation>
        <location>Secreted</location>
    </subcellularLocation>
</comment>
<comment type="PTM">
    <text evidence="3">Subject to proteolytic processing after secretion. Cleavage occurs between Gly-1205 and Leu-1206. This gives rise to a N-terminal gellan lyase of 130 kDa being the mature form of the gellan lyase. The function of C-terminal gellan lyase is not known.</text>
</comment>